<keyword id="KW-0413">Isomerase</keyword>
<protein>
    <recommendedName>
        <fullName evidence="1">Ribose-5-phosphate isomerase A</fullName>
        <ecNumber evidence="1">5.3.1.6</ecNumber>
    </recommendedName>
    <alternativeName>
        <fullName evidence="1">Phosphoriboisomerase A</fullName>
        <shortName evidence="1">PRI</shortName>
    </alternativeName>
</protein>
<gene>
    <name evidence="1" type="primary">rpiA</name>
    <name type="ordered locus">ECP_2906</name>
</gene>
<evidence type="ECO:0000255" key="1">
    <source>
        <dbReference type="HAMAP-Rule" id="MF_00170"/>
    </source>
</evidence>
<proteinExistence type="inferred from homology"/>
<comment type="function">
    <text evidence="1">Catalyzes the reversible conversion of ribose-5-phosphate to ribulose 5-phosphate.</text>
</comment>
<comment type="catalytic activity">
    <reaction evidence="1">
        <text>aldehydo-D-ribose 5-phosphate = D-ribulose 5-phosphate</text>
        <dbReference type="Rhea" id="RHEA:14657"/>
        <dbReference type="ChEBI" id="CHEBI:58121"/>
        <dbReference type="ChEBI" id="CHEBI:58273"/>
        <dbReference type="EC" id="5.3.1.6"/>
    </reaction>
</comment>
<comment type="pathway">
    <text evidence="1">Carbohydrate degradation; pentose phosphate pathway; D-ribose 5-phosphate from D-ribulose 5-phosphate (non-oxidative stage): step 1/1.</text>
</comment>
<comment type="subunit">
    <text evidence="1">Homodimer.</text>
</comment>
<comment type="similarity">
    <text evidence="1">Belongs to the ribose 5-phosphate isomerase family.</text>
</comment>
<reference key="1">
    <citation type="journal article" date="2006" name="Mol. Microbiol.">
        <title>Role of pathogenicity island-associated integrases in the genome plasticity of uropathogenic Escherichia coli strain 536.</title>
        <authorList>
            <person name="Hochhut B."/>
            <person name="Wilde C."/>
            <person name="Balling G."/>
            <person name="Middendorf B."/>
            <person name="Dobrindt U."/>
            <person name="Brzuszkiewicz E."/>
            <person name="Gottschalk G."/>
            <person name="Carniel E."/>
            <person name="Hacker J."/>
        </authorList>
    </citation>
    <scope>NUCLEOTIDE SEQUENCE [LARGE SCALE GENOMIC DNA]</scope>
    <source>
        <strain>536 / UPEC</strain>
    </source>
</reference>
<organism>
    <name type="scientific">Escherichia coli O6:K15:H31 (strain 536 / UPEC)</name>
    <dbReference type="NCBI Taxonomy" id="362663"/>
    <lineage>
        <taxon>Bacteria</taxon>
        <taxon>Pseudomonadati</taxon>
        <taxon>Pseudomonadota</taxon>
        <taxon>Gammaproteobacteria</taxon>
        <taxon>Enterobacterales</taxon>
        <taxon>Enterobacteriaceae</taxon>
        <taxon>Escherichia</taxon>
    </lineage>
</organism>
<feature type="chain" id="PRO_1000097663" description="Ribose-5-phosphate isomerase A">
    <location>
        <begin position="1"/>
        <end position="231"/>
    </location>
</feature>
<feature type="active site" description="Proton acceptor" evidence="1">
    <location>
        <position position="115"/>
    </location>
</feature>
<feature type="binding site" evidence="1">
    <location>
        <begin position="40"/>
        <end position="43"/>
    </location>
    <ligand>
        <name>substrate</name>
    </ligand>
</feature>
<feature type="binding site" evidence="1">
    <location>
        <begin position="93"/>
        <end position="96"/>
    </location>
    <ligand>
        <name>substrate</name>
    </ligand>
</feature>
<feature type="binding site" evidence="1">
    <location>
        <begin position="106"/>
        <end position="109"/>
    </location>
    <ligand>
        <name>substrate</name>
    </ligand>
</feature>
<feature type="binding site" evidence="1">
    <location>
        <position position="133"/>
    </location>
    <ligand>
        <name>substrate</name>
    </ligand>
</feature>
<sequence>MRVKFHTTGETIMTQDELKKAVGWAALQYVQPGTIVGVGTGSTAAHFINALGTMKGQIEGAVSSSDASTEKLKSLGIHVFDLNEVDSLGIYVDGADEINGHMQMIKGGGAALTREKIIASVAEKFICIADASKQVDILGKFPLPVEVIPMARSAVARQLVKLGGRPEYRQGVVTDNGNVILDVHGMEILGPDSDGKRHKCDSWRGDCWFVANRGADVALIGTPDGVKTIVK</sequence>
<dbReference type="EC" id="5.3.1.6" evidence="1"/>
<dbReference type="EMBL" id="CP000247">
    <property type="protein sequence ID" value="ABG70890.1"/>
    <property type="molecule type" value="Genomic_DNA"/>
</dbReference>
<dbReference type="SMR" id="Q0TDT9"/>
<dbReference type="KEGG" id="ecp:ECP_2906"/>
<dbReference type="HOGENOM" id="CLU_056590_1_1_6"/>
<dbReference type="UniPathway" id="UPA00115">
    <property type="reaction ID" value="UER00412"/>
</dbReference>
<dbReference type="Proteomes" id="UP000009182">
    <property type="component" value="Chromosome"/>
</dbReference>
<dbReference type="GO" id="GO:0005829">
    <property type="term" value="C:cytosol"/>
    <property type="evidence" value="ECO:0007669"/>
    <property type="project" value="TreeGrafter"/>
</dbReference>
<dbReference type="GO" id="GO:0004751">
    <property type="term" value="F:ribose-5-phosphate isomerase activity"/>
    <property type="evidence" value="ECO:0007669"/>
    <property type="project" value="UniProtKB-UniRule"/>
</dbReference>
<dbReference type="GO" id="GO:0006014">
    <property type="term" value="P:D-ribose metabolic process"/>
    <property type="evidence" value="ECO:0007669"/>
    <property type="project" value="TreeGrafter"/>
</dbReference>
<dbReference type="GO" id="GO:0009052">
    <property type="term" value="P:pentose-phosphate shunt, non-oxidative branch"/>
    <property type="evidence" value="ECO:0007669"/>
    <property type="project" value="UniProtKB-UniRule"/>
</dbReference>
<dbReference type="CDD" id="cd01398">
    <property type="entry name" value="RPI_A"/>
    <property type="match status" value="1"/>
</dbReference>
<dbReference type="FunFam" id="3.40.50.1360:FF:000001">
    <property type="entry name" value="Ribose-5-phosphate isomerase A"/>
    <property type="match status" value="1"/>
</dbReference>
<dbReference type="Gene3D" id="3.30.70.260">
    <property type="match status" value="1"/>
</dbReference>
<dbReference type="Gene3D" id="3.40.50.1360">
    <property type="match status" value="1"/>
</dbReference>
<dbReference type="HAMAP" id="MF_00170">
    <property type="entry name" value="Rib_5P_isom_A"/>
    <property type="match status" value="1"/>
</dbReference>
<dbReference type="InterPro" id="IPR037171">
    <property type="entry name" value="NagB/RpiA_transferase-like"/>
</dbReference>
<dbReference type="InterPro" id="IPR020672">
    <property type="entry name" value="Ribose5P_isomerase_typA_subgr"/>
</dbReference>
<dbReference type="InterPro" id="IPR004788">
    <property type="entry name" value="Ribose5P_isomerase_type_A"/>
</dbReference>
<dbReference type="NCBIfam" id="NF001924">
    <property type="entry name" value="PRK00702.1"/>
    <property type="match status" value="1"/>
</dbReference>
<dbReference type="NCBIfam" id="TIGR00021">
    <property type="entry name" value="rpiA"/>
    <property type="match status" value="1"/>
</dbReference>
<dbReference type="PANTHER" id="PTHR11934">
    <property type="entry name" value="RIBOSE-5-PHOSPHATE ISOMERASE"/>
    <property type="match status" value="1"/>
</dbReference>
<dbReference type="PANTHER" id="PTHR11934:SF0">
    <property type="entry name" value="RIBOSE-5-PHOSPHATE ISOMERASE"/>
    <property type="match status" value="1"/>
</dbReference>
<dbReference type="Pfam" id="PF06026">
    <property type="entry name" value="Rib_5-P_isom_A"/>
    <property type="match status" value="1"/>
</dbReference>
<dbReference type="SUPFAM" id="SSF100950">
    <property type="entry name" value="NagB/RpiA/CoA transferase-like"/>
    <property type="match status" value="1"/>
</dbReference>
<accession>Q0TDT9</accession>
<name>RPIA_ECOL5</name>